<keyword id="KW-0963">Cytoplasm</keyword>
<keyword id="KW-0489">Methyltransferase</keyword>
<keyword id="KW-0698">rRNA processing</keyword>
<keyword id="KW-0949">S-adenosyl-L-methionine</keyword>
<keyword id="KW-0808">Transferase</keyword>
<protein>
    <recommendedName>
        <fullName evidence="1">Ribosomal RNA small subunit methyltransferase H</fullName>
        <ecNumber evidence="1">2.1.1.199</ecNumber>
    </recommendedName>
    <alternativeName>
        <fullName evidence="1">16S rRNA m(4)C1402 methyltransferase</fullName>
    </alternativeName>
    <alternativeName>
        <fullName evidence="1">rRNA (cytosine-N(4)-)-methyltransferase RsmH</fullName>
    </alternativeName>
</protein>
<gene>
    <name evidence="1" type="primary">rsmH</name>
    <name type="synonym">mraW</name>
    <name type="ordered locus">ASA_0390</name>
</gene>
<comment type="function">
    <text evidence="1">Specifically methylates the N4 position of cytidine in position 1402 (C1402) of 16S rRNA.</text>
</comment>
<comment type="catalytic activity">
    <reaction evidence="1">
        <text>cytidine(1402) in 16S rRNA + S-adenosyl-L-methionine = N(4)-methylcytidine(1402) in 16S rRNA + S-adenosyl-L-homocysteine + H(+)</text>
        <dbReference type="Rhea" id="RHEA:42928"/>
        <dbReference type="Rhea" id="RHEA-COMP:10286"/>
        <dbReference type="Rhea" id="RHEA-COMP:10287"/>
        <dbReference type="ChEBI" id="CHEBI:15378"/>
        <dbReference type="ChEBI" id="CHEBI:57856"/>
        <dbReference type="ChEBI" id="CHEBI:59789"/>
        <dbReference type="ChEBI" id="CHEBI:74506"/>
        <dbReference type="ChEBI" id="CHEBI:82748"/>
        <dbReference type="EC" id="2.1.1.199"/>
    </reaction>
</comment>
<comment type="subcellular location">
    <subcellularLocation>
        <location evidence="1">Cytoplasm</location>
    </subcellularLocation>
</comment>
<comment type="similarity">
    <text evidence="1">Belongs to the methyltransferase superfamily. RsmH family.</text>
</comment>
<sequence length="312" mass="34395">MTQAAEHITVLLHEAVEGLAIKPDGIYVDGTFGRGGHSRLILQHLGPNGRLIAIDRDPQAIAEAAKIQDPRFEIVHGPFSGIVSYLDERGLLGKVDGFLLDLGVSSPQLDDAERGFSFMKDGPLDMRMDPTSGQSAAQWLARADVDDIAWVLKTFGEERFAKKIARAIVHDRVTEPYVRTRQLAEMIARVNPSKEKGKHAATRSFQAIRIYINSELDEIETALNGALQALAPEGRLSVISFHSLEDRLVKHFIRKHEKGPEVPRGIPLTEAQLAGGRKLKSVGKALKPSEHEVTENSRSRSSVLRVAQRLAE</sequence>
<accession>A4SI48</accession>
<dbReference type="EC" id="2.1.1.199" evidence="1"/>
<dbReference type="EMBL" id="CP000644">
    <property type="protein sequence ID" value="ABO88570.1"/>
    <property type="molecule type" value="Genomic_DNA"/>
</dbReference>
<dbReference type="RefSeq" id="WP_005314206.1">
    <property type="nucleotide sequence ID" value="NC_009348.1"/>
</dbReference>
<dbReference type="SMR" id="A4SI48"/>
<dbReference type="STRING" id="29491.GCA_000820065_04387"/>
<dbReference type="KEGG" id="asa:ASA_0390"/>
<dbReference type="eggNOG" id="COG0275">
    <property type="taxonomic scope" value="Bacteria"/>
</dbReference>
<dbReference type="HOGENOM" id="CLU_038422_2_0_6"/>
<dbReference type="Proteomes" id="UP000000225">
    <property type="component" value="Chromosome"/>
</dbReference>
<dbReference type="GO" id="GO:0005737">
    <property type="term" value="C:cytoplasm"/>
    <property type="evidence" value="ECO:0007669"/>
    <property type="project" value="UniProtKB-SubCell"/>
</dbReference>
<dbReference type="GO" id="GO:0071424">
    <property type="term" value="F:rRNA (cytosine-N4-)-methyltransferase activity"/>
    <property type="evidence" value="ECO:0007669"/>
    <property type="project" value="UniProtKB-UniRule"/>
</dbReference>
<dbReference type="GO" id="GO:0070475">
    <property type="term" value="P:rRNA base methylation"/>
    <property type="evidence" value="ECO:0007669"/>
    <property type="project" value="UniProtKB-UniRule"/>
</dbReference>
<dbReference type="FunFam" id="1.10.150.170:FF:000001">
    <property type="entry name" value="Ribosomal RNA small subunit methyltransferase H"/>
    <property type="match status" value="1"/>
</dbReference>
<dbReference type="Gene3D" id="1.10.150.170">
    <property type="entry name" value="Putative methyltransferase TM0872, insert domain"/>
    <property type="match status" value="1"/>
</dbReference>
<dbReference type="Gene3D" id="3.40.50.150">
    <property type="entry name" value="Vaccinia Virus protein VP39"/>
    <property type="match status" value="1"/>
</dbReference>
<dbReference type="HAMAP" id="MF_01007">
    <property type="entry name" value="16SrRNA_methyltr_H"/>
    <property type="match status" value="1"/>
</dbReference>
<dbReference type="InterPro" id="IPR002903">
    <property type="entry name" value="RsmH"/>
</dbReference>
<dbReference type="InterPro" id="IPR023397">
    <property type="entry name" value="SAM-dep_MeTrfase_MraW_recog"/>
</dbReference>
<dbReference type="InterPro" id="IPR029063">
    <property type="entry name" value="SAM-dependent_MTases_sf"/>
</dbReference>
<dbReference type="NCBIfam" id="TIGR00006">
    <property type="entry name" value="16S rRNA (cytosine(1402)-N(4))-methyltransferase RsmH"/>
    <property type="match status" value="1"/>
</dbReference>
<dbReference type="PANTHER" id="PTHR11265:SF0">
    <property type="entry name" value="12S RRNA N4-METHYLCYTIDINE METHYLTRANSFERASE"/>
    <property type="match status" value="1"/>
</dbReference>
<dbReference type="PANTHER" id="PTHR11265">
    <property type="entry name" value="S-ADENOSYL-METHYLTRANSFERASE MRAW"/>
    <property type="match status" value="1"/>
</dbReference>
<dbReference type="Pfam" id="PF01795">
    <property type="entry name" value="Methyltransf_5"/>
    <property type="match status" value="1"/>
</dbReference>
<dbReference type="PIRSF" id="PIRSF004486">
    <property type="entry name" value="MraW"/>
    <property type="match status" value="1"/>
</dbReference>
<dbReference type="SUPFAM" id="SSF81799">
    <property type="entry name" value="Putative methyltransferase TM0872, insert domain"/>
    <property type="match status" value="1"/>
</dbReference>
<dbReference type="SUPFAM" id="SSF53335">
    <property type="entry name" value="S-adenosyl-L-methionine-dependent methyltransferases"/>
    <property type="match status" value="1"/>
</dbReference>
<organism>
    <name type="scientific">Aeromonas salmonicida (strain A449)</name>
    <dbReference type="NCBI Taxonomy" id="382245"/>
    <lineage>
        <taxon>Bacteria</taxon>
        <taxon>Pseudomonadati</taxon>
        <taxon>Pseudomonadota</taxon>
        <taxon>Gammaproteobacteria</taxon>
        <taxon>Aeromonadales</taxon>
        <taxon>Aeromonadaceae</taxon>
        <taxon>Aeromonas</taxon>
    </lineage>
</organism>
<evidence type="ECO:0000255" key="1">
    <source>
        <dbReference type="HAMAP-Rule" id="MF_01007"/>
    </source>
</evidence>
<evidence type="ECO:0000256" key="2">
    <source>
        <dbReference type="SAM" id="MobiDB-lite"/>
    </source>
</evidence>
<name>RSMH_AERS4</name>
<feature type="chain" id="PRO_0000386699" description="Ribosomal RNA small subunit methyltransferase H">
    <location>
        <begin position="1"/>
        <end position="312"/>
    </location>
</feature>
<feature type="region of interest" description="Disordered" evidence="2">
    <location>
        <begin position="285"/>
        <end position="306"/>
    </location>
</feature>
<feature type="compositionally biased region" description="Basic and acidic residues" evidence="2">
    <location>
        <begin position="287"/>
        <end position="298"/>
    </location>
</feature>
<feature type="binding site" evidence="1">
    <location>
        <begin position="35"/>
        <end position="37"/>
    </location>
    <ligand>
        <name>S-adenosyl-L-methionine</name>
        <dbReference type="ChEBI" id="CHEBI:59789"/>
    </ligand>
</feature>
<feature type="binding site" evidence="1">
    <location>
        <position position="55"/>
    </location>
    <ligand>
        <name>S-adenosyl-L-methionine</name>
        <dbReference type="ChEBI" id="CHEBI:59789"/>
    </ligand>
</feature>
<feature type="binding site" evidence="1">
    <location>
        <position position="101"/>
    </location>
    <ligand>
        <name>S-adenosyl-L-methionine</name>
        <dbReference type="ChEBI" id="CHEBI:59789"/>
    </ligand>
</feature>
<feature type="binding site" evidence="1">
    <location>
        <position position="108"/>
    </location>
    <ligand>
        <name>S-adenosyl-L-methionine</name>
        <dbReference type="ChEBI" id="CHEBI:59789"/>
    </ligand>
</feature>
<reference key="1">
    <citation type="journal article" date="2008" name="BMC Genomics">
        <title>The genome of Aeromonas salmonicida subsp. salmonicida A449: insights into the evolution of a fish pathogen.</title>
        <authorList>
            <person name="Reith M.E."/>
            <person name="Singh R.K."/>
            <person name="Curtis B."/>
            <person name="Boyd J.M."/>
            <person name="Bouevitch A."/>
            <person name="Kimball J."/>
            <person name="Munholland J."/>
            <person name="Murphy C."/>
            <person name="Sarty D."/>
            <person name="Williams J."/>
            <person name="Nash J.H."/>
            <person name="Johnson S.C."/>
            <person name="Brown L.L."/>
        </authorList>
    </citation>
    <scope>NUCLEOTIDE SEQUENCE [LARGE SCALE GENOMIC DNA]</scope>
    <source>
        <strain>A449</strain>
    </source>
</reference>
<proteinExistence type="inferred from homology"/>